<organism>
    <name type="scientific">Actinobacillus succinogenes (strain ATCC 55618 / DSM 22257 / CCUG 43843 / 130Z)</name>
    <dbReference type="NCBI Taxonomy" id="339671"/>
    <lineage>
        <taxon>Bacteria</taxon>
        <taxon>Pseudomonadati</taxon>
        <taxon>Pseudomonadota</taxon>
        <taxon>Gammaproteobacteria</taxon>
        <taxon>Pasteurellales</taxon>
        <taxon>Pasteurellaceae</taxon>
        <taxon>Actinobacillus</taxon>
    </lineage>
</organism>
<sequence>MLVWLASFLEQYFSSFHVISYLTVRAVLSLLTALLLSLWIGPKMILRLQIFKFGQEVRNDGPESHFQKRGTPTMGGIMILATITASSLLWGDLSNPYIWCSLFVLLGYGAIGFVDDYRKIKYKNTDGLIARWKYFWLSVVAFIAVFTMYMIGKDTDATRLVVPFFKDIMPQLGLFYIVLAYFVIVGTSNAVNLTDGLDGLAIMPTVFVAGAFAIIAWATGNVEISKYLYIPYVSYTSELVIFCTAIVGAGLGFLWFNTYPAQVFMGDVGSLALGGALGVIAVLVRQEFLLVIMGGVFVMETVSVILQVGSYKLRKKRIFRMAPIHHHYELKGWPEPRVIIRFWIISLMLVLLGLVTLKLR</sequence>
<comment type="function">
    <text evidence="1">Catalyzes the initial step of the lipid cycle reactions in the biosynthesis of the cell wall peptidoglycan: transfers peptidoglycan precursor phospho-MurNAc-pentapeptide from UDP-MurNAc-pentapeptide onto the lipid carrier undecaprenyl phosphate, yielding undecaprenyl-pyrophosphoryl-MurNAc-pentapeptide, known as lipid I.</text>
</comment>
<comment type="catalytic activity">
    <reaction evidence="1">
        <text>UDP-N-acetyl-alpha-D-muramoyl-L-alanyl-gamma-D-glutamyl-meso-2,6-diaminopimeloyl-D-alanyl-D-alanine + di-trans,octa-cis-undecaprenyl phosphate = di-trans,octa-cis-undecaprenyl diphospho-N-acetyl-alpha-D-muramoyl-L-alanyl-D-glutamyl-meso-2,6-diaminopimeloyl-D-alanyl-D-alanine + UMP</text>
        <dbReference type="Rhea" id="RHEA:28386"/>
        <dbReference type="ChEBI" id="CHEBI:57865"/>
        <dbReference type="ChEBI" id="CHEBI:60392"/>
        <dbReference type="ChEBI" id="CHEBI:61386"/>
        <dbReference type="ChEBI" id="CHEBI:61387"/>
        <dbReference type="EC" id="2.7.8.13"/>
    </reaction>
</comment>
<comment type="cofactor">
    <cofactor evidence="1">
        <name>Mg(2+)</name>
        <dbReference type="ChEBI" id="CHEBI:18420"/>
    </cofactor>
</comment>
<comment type="pathway">
    <text evidence="1">Cell wall biogenesis; peptidoglycan biosynthesis.</text>
</comment>
<comment type="subcellular location">
    <subcellularLocation>
        <location evidence="1">Cell inner membrane</location>
        <topology evidence="1">Multi-pass membrane protein</topology>
    </subcellularLocation>
</comment>
<comment type="similarity">
    <text evidence="1">Belongs to the glycosyltransferase 4 family. MraY subfamily.</text>
</comment>
<accession>A6VQN6</accession>
<feature type="chain" id="PRO_1000071044" description="Phospho-N-acetylmuramoyl-pentapeptide-transferase">
    <location>
        <begin position="1"/>
        <end position="360"/>
    </location>
</feature>
<feature type="transmembrane region" description="Helical" evidence="1">
    <location>
        <begin position="26"/>
        <end position="46"/>
    </location>
</feature>
<feature type="transmembrane region" description="Helical" evidence="1">
    <location>
        <begin position="73"/>
        <end position="93"/>
    </location>
</feature>
<feature type="transmembrane region" description="Helical" evidence="1">
    <location>
        <begin position="94"/>
        <end position="114"/>
    </location>
</feature>
<feature type="transmembrane region" description="Helical" evidence="1">
    <location>
        <begin position="132"/>
        <end position="152"/>
    </location>
</feature>
<feature type="transmembrane region" description="Helical" evidence="1">
    <location>
        <begin position="168"/>
        <end position="188"/>
    </location>
</feature>
<feature type="transmembrane region" description="Helical" evidence="1">
    <location>
        <begin position="199"/>
        <end position="219"/>
    </location>
</feature>
<feature type="transmembrane region" description="Helical" evidence="1">
    <location>
        <begin position="239"/>
        <end position="259"/>
    </location>
</feature>
<feature type="transmembrane region" description="Helical" evidence="1">
    <location>
        <begin position="263"/>
        <end position="283"/>
    </location>
</feature>
<feature type="transmembrane region" description="Helical" evidence="1">
    <location>
        <begin position="288"/>
        <end position="308"/>
    </location>
</feature>
<feature type="transmembrane region" description="Helical" evidence="1">
    <location>
        <begin position="338"/>
        <end position="358"/>
    </location>
</feature>
<keyword id="KW-0131">Cell cycle</keyword>
<keyword id="KW-0132">Cell division</keyword>
<keyword id="KW-0997">Cell inner membrane</keyword>
<keyword id="KW-1003">Cell membrane</keyword>
<keyword id="KW-0133">Cell shape</keyword>
<keyword id="KW-0961">Cell wall biogenesis/degradation</keyword>
<keyword id="KW-0460">Magnesium</keyword>
<keyword id="KW-0472">Membrane</keyword>
<keyword id="KW-0479">Metal-binding</keyword>
<keyword id="KW-0573">Peptidoglycan synthesis</keyword>
<keyword id="KW-1185">Reference proteome</keyword>
<keyword id="KW-0808">Transferase</keyword>
<keyword id="KW-0812">Transmembrane</keyword>
<keyword id="KW-1133">Transmembrane helix</keyword>
<reference key="1">
    <citation type="journal article" date="2010" name="BMC Genomics">
        <title>A genomic perspective on the potential of Actinobacillus succinogenes for industrial succinate production.</title>
        <authorList>
            <person name="McKinlay J.B."/>
            <person name="Laivenieks M."/>
            <person name="Schindler B.D."/>
            <person name="McKinlay A.A."/>
            <person name="Siddaramappa S."/>
            <person name="Challacombe J.F."/>
            <person name="Lowry S.R."/>
            <person name="Clum A."/>
            <person name="Lapidus A.L."/>
            <person name="Burkhart K.B."/>
            <person name="Harkins V."/>
            <person name="Vieille C."/>
        </authorList>
    </citation>
    <scope>NUCLEOTIDE SEQUENCE [LARGE SCALE GENOMIC DNA]</scope>
    <source>
        <strain>ATCC 55618 / DSM 22257 / CCUG 43843 / 130Z</strain>
    </source>
</reference>
<dbReference type="EC" id="2.7.8.13" evidence="1"/>
<dbReference type="EMBL" id="CP000746">
    <property type="protein sequence ID" value="ABR75283.1"/>
    <property type="molecule type" value="Genomic_DNA"/>
</dbReference>
<dbReference type="RefSeq" id="WP_012073660.1">
    <property type="nucleotide sequence ID" value="NC_009655.1"/>
</dbReference>
<dbReference type="SMR" id="A6VQN6"/>
<dbReference type="STRING" id="339671.Asuc_1935"/>
<dbReference type="KEGG" id="asu:Asuc_1935"/>
<dbReference type="eggNOG" id="COG0472">
    <property type="taxonomic scope" value="Bacteria"/>
</dbReference>
<dbReference type="HOGENOM" id="CLU_023982_0_0_6"/>
<dbReference type="OrthoDB" id="9805475at2"/>
<dbReference type="UniPathway" id="UPA00219"/>
<dbReference type="Proteomes" id="UP000001114">
    <property type="component" value="Chromosome"/>
</dbReference>
<dbReference type="GO" id="GO:0005886">
    <property type="term" value="C:plasma membrane"/>
    <property type="evidence" value="ECO:0007669"/>
    <property type="project" value="UniProtKB-SubCell"/>
</dbReference>
<dbReference type="GO" id="GO:0046872">
    <property type="term" value="F:metal ion binding"/>
    <property type="evidence" value="ECO:0007669"/>
    <property type="project" value="UniProtKB-KW"/>
</dbReference>
<dbReference type="GO" id="GO:0008963">
    <property type="term" value="F:phospho-N-acetylmuramoyl-pentapeptide-transferase activity"/>
    <property type="evidence" value="ECO:0007669"/>
    <property type="project" value="UniProtKB-UniRule"/>
</dbReference>
<dbReference type="GO" id="GO:0051992">
    <property type="term" value="F:UDP-N-acetylmuramoyl-L-alanyl-D-glutamyl-meso-2,6-diaminopimelyl-D-alanyl-D-alanine:undecaprenyl-phosphate transferase activity"/>
    <property type="evidence" value="ECO:0007669"/>
    <property type="project" value="RHEA"/>
</dbReference>
<dbReference type="GO" id="GO:0051301">
    <property type="term" value="P:cell division"/>
    <property type="evidence" value="ECO:0007669"/>
    <property type="project" value="UniProtKB-KW"/>
</dbReference>
<dbReference type="GO" id="GO:0071555">
    <property type="term" value="P:cell wall organization"/>
    <property type="evidence" value="ECO:0007669"/>
    <property type="project" value="UniProtKB-KW"/>
</dbReference>
<dbReference type="GO" id="GO:0009252">
    <property type="term" value="P:peptidoglycan biosynthetic process"/>
    <property type="evidence" value="ECO:0007669"/>
    <property type="project" value="UniProtKB-UniRule"/>
</dbReference>
<dbReference type="GO" id="GO:0008360">
    <property type="term" value="P:regulation of cell shape"/>
    <property type="evidence" value="ECO:0007669"/>
    <property type="project" value="UniProtKB-KW"/>
</dbReference>
<dbReference type="CDD" id="cd06852">
    <property type="entry name" value="GT_MraY"/>
    <property type="match status" value="1"/>
</dbReference>
<dbReference type="HAMAP" id="MF_00038">
    <property type="entry name" value="MraY"/>
    <property type="match status" value="1"/>
</dbReference>
<dbReference type="InterPro" id="IPR000715">
    <property type="entry name" value="Glycosyl_transferase_4"/>
</dbReference>
<dbReference type="InterPro" id="IPR003524">
    <property type="entry name" value="PNAcMuramoyl-5peptid_Trfase"/>
</dbReference>
<dbReference type="InterPro" id="IPR018480">
    <property type="entry name" value="PNAcMuramoyl-5peptid_Trfase_CS"/>
</dbReference>
<dbReference type="NCBIfam" id="TIGR00445">
    <property type="entry name" value="mraY"/>
    <property type="match status" value="1"/>
</dbReference>
<dbReference type="PANTHER" id="PTHR22926">
    <property type="entry name" value="PHOSPHO-N-ACETYLMURAMOYL-PENTAPEPTIDE-TRANSFERASE"/>
    <property type="match status" value="1"/>
</dbReference>
<dbReference type="PANTHER" id="PTHR22926:SF5">
    <property type="entry name" value="PHOSPHO-N-ACETYLMURAMOYL-PENTAPEPTIDE-TRANSFERASE HOMOLOG"/>
    <property type="match status" value="1"/>
</dbReference>
<dbReference type="Pfam" id="PF00953">
    <property type="entry name" value="Glycos_transf_4"/>
    <property type="match status" value="1"/>
</dbReference>
<dbReference type="Pfam" id="PF10555">
    <property type="entry name" value="MraY_sig1"/>
    <property type="match status" value="1"/>
</dbReference>
<dbReference type="PROSITE" id="PS01347">
    <property type="entry name" value="MRAY_1"/>
    <property type="match status" value="1"/>
</dbReference>
<dbReference type="PROSITE" id="PS01348">
    <property type="entry name" value="MRAY_2"/>
    <property type="match status" value="1"/>
</dbReference>
<gene>
    <name evidence="1" type="primary">mraY</name>
    <name type="ordered locus">Asuc_1935</name>
</gene>
<protein>
    <recommendedName>
        <fullName evidence="1">Phospho-N-acetylmuramoyl-pentapeptide-transferase</fullName>
        <ecNumber evidence="1">2.7.8.13</ecNumber>
    </recommendedName>
    <alternativeName>
        <fullName evidence="1">UDP-MurNAc-pentapeptide phosphotransferase</fullName>
    </alternativeName>
</protein>
<proteinExistence type="inferred from homology"/>
<evidence type="ECO:0000255" key="1">
    <source>
        <dbReference type="HAMAP-Rule" id="MF_00038"/>
    </source>
</evidence>
<name>MRAY_ACTSZ</name>